<name>OR6C2_HUMAN</name>
<proteinExistence type="inferred from homology"/>
<gene>
    <name type="primary">OR6C2</name>
</gene>
<comment type="function">
    <text evidence="4">Odorant receptor.</text>
</comment>
<comment type="subcellular location">
    <subcellularLocation>
        <location>Cell membrane</location>
        <topology>Multi-pass membrane protein</topology>
    </subcellularLocation>
</comment>
<comment type="similarity">
    <text evidence="2">Belongs to the G-protein coupled receptor 1 family.</text>
</comment>
<comment type="online information" name="Human Olfactory Receptor Data Exploratorium (HORDE)">
    <link uri="http://genome.weizmann.ac.il/horde/card/index/symbol:OR6C2"/>
</comment>
<organism>
    <name type="scientific">Homo sapiens</name>
    <name type="common">Human</name>
    <dbReference type="NCBI Taxonomy" id="9606"/>
    <lineage>
        <taxon>Eukaryota</taxon>
        <taxon>Metazoa</taxon>
        <taxon>Chordata</taxon>
        <taxon>Craniata</taxon>
        <taxon>Vertebrata</taxon>
        <taxon>Euteleostomi</taxon>
        <taxon>Mammalia</taxon>
        <taxon>Eutheria</taxon>
        <taxon>Euarchontoglires</taxon>
        <taxon>Primates</taxon>
        <taxon>Haplorrhini</taxon>
        <taxon>Catarrhini</taxon>
        <taxon>Hominidae</taxon>
        <taxon>Homo</taxon>
    </lineage>
</organism>
<evidence type="ECO:0000255" key="1"/>
<evidence type="ECO:0000255" key="2">
    <source>
        <dbReference type="PROSITE-ProRule" id="PRU00521"/>
    </source>
</evidence>
<evidence type="ECO:0000269" key="3">
    <source>
    </source>
</evidence>
<evidence type="ECO:0000305" key="4"/>
<protein>
    <recommendedName>
        <fullName>Olfactory receptor 6C2</fullName>
    </recommendedName>
    <alternativeName>
        <fullName>HSA3</fullName>
    </alternativeName>
</protein>
<feature type="chain" id="PRO_0000150624" description="Olfactory receptor 6C2">
    <location>
        <begin position="1"/>
        <end position="312"/>
    </location>
</feature>
<feature type="topological domain" description="Extracellular" evidence="1">
    <location>
        <begin position="1"/>
        <end position="23"/>
    </location>
</feature>
<feature type="transmembrane region" description="Helical; Name=1" evidence="1">
    <location>
        <begin position="24"/>
        <end position="44"/>
    </location>
</feature>
<feature type="topological domain" description="Cytoplasmic" evidence="1">
    <location>
        <begin position="45"/>
        <end position="52"/>
    </location>
</feature>
<feature type="transmembrane region" description="Helical; Name=2" evidence="1">
    <location>
        <begin position="53"/>
        <end position="73"/>
    </location>
</feature>
<feature type="topological domain" description="Extracellular" evidence="1">
    <location>
        <begin position="74"/>
        <end position="97"/>
    </location>
</feature>
<feature type="transmembrane region" description="Helical; Name=3" evidence="1">
    <location>
        <begin position="98"/>
        <end position="118"/>
    </location>
</feature>
<feature type="topological domain" description="Cytoplasmic" evidence="1">
    <location>
        <begin position="119"/>
        <end position="137"/>
    </location>
</feature>
<feature type="transmembrane region" description="Helical; Name=4" evidence="1">
    <location>
        <begin position="138"/>
        <end position="158"/>
    </location>
</feature>
<feature type="topological domain" description="Extracellular" evidence="1">
    <location>
        <begin position="159"/>
        <end position="195"/>
    </location>
</feature>
<feature type="transmembrane region" description="Helical; Name=5" evidence="1">
    <location>
        <begin position="196"/>
        <end position="215"/>
    </location>
</feature>
<feature type="topological domain" description="Cytoplasmic" evidence="1">
    <location>
        <begin position="216"/>
        <end position="235"/>
    </location>
</feature>
<feature type="transmembrane region" description="Helical; Name=6" evidence="1">
    <location>
        <begin position="236"/>
        <end position="256"/>
    </location>
</feature>
<feature type="topological domain" description="Extracellular" evidence="1">
    <location>
        <begin position="257"/>
        <end position="269"/>
    </location>
</feature>
<feature type="transmembrane region" description="Helical; Name=7" evidence="1">
    <location>
        <begin position="270"/>
        <end position="290"/>
    </location>
</feature>
<feature type="topological domain" description="Cytoplasmic" evidence="1">
    <location>
        <begin position="291"/>
        <end position="312"/>
    </location>
</feature>
<feature type="glycosylation site" description="N-linked (GlcNAc...) asparagine" evidence="1">
    <location>
        <position position="3"/>
    </location>
</feature>
<feature type="glycosylation site" description="N-linked (GlcNAc...) asparagine" evidence="1">
    <location>
        <position position="82"/>
    </location>
</feature>
<feature type="disulfide bond" evidence="2">
    <location>
        <begin position="95"/>
        <end position="187"/>
    </location>
</feature>
<feature type="sequence variant" id="VAR_034243" description="In dbSNP:rs11171466.">
    <original>P</original>
    <variation>A</variation>
    <location>
        <position position="181"/>
    </location>
</feature>
<feature type="sequence variant" id="VAR_034244" description="In dbSNP:rs11171467." evidence="3">
    <original>L</original>
    <variation>P</variation>
    <location>
        <position position="209"/>
    </location>
</feature>
<sequence>MKNHTVIRTFILLGLTGDPHLQVLLFIFLFLTYMLSVTGNLTIITLTLVDHHLKTPMYFFLRNFSFLEVSFTTVCIPRFLYNISMGDNTITYNACASQIFFVILFGATEFFLLAAMSYDRYVAICKPLHYVVIMNNRVCTLLVLCCWVAGLMIIVPPLSLGLQLEFCDSNAIDHFSCDAGPLLKISCSDTWVIEQMVILMAVFALIITLVCVILSYLYIVRTILKFPSVQQRKKAFSTCSSHMIVVSIAYGSCIFIYIKPSAKDEVAINKGVSVLTTSVAPLLNPFIYTLRNKQVKQAFSDSIKRIAFLSKK</sequence>
<dbReference type="EMBL" id="AC122685">
    <property type="status" value="NOT_ANNOTATED_CDS"/>
    <property type="molecule type" value="Genomic_DNA"/>
</dbReference>
<dbReference type="EMBL" id="AF179766">
    <property type="protein sequence ID" value="AAF40351.1"/>
    <property type="molecule type" value="Genomic_DNA"/>
</dbReference>
<dbReference type="CCDS" id="CCDS31824.1"/>
<dbReference type="RefSeq" id="NP_473446.1">
    <property type="nucleotide sequence ID" value="NM_054105.2"/>
</dbReference>
<dbReference type="SMR" id="Q9NZP2"/>
<dbReference type="FunCoup" id="Q9NZP2">
    <property type="interactions" value="418"/>
</dbReference>
<dbReference type="STRING" id="9606.ENSP00000493222"/>
<dbReference type="GlyCosmos" id="Q9NZP2">
    <property type="glycosylation" value="2 sites, No reported glycans"/>
</dbReference>
<dbReference type="GlyGen" id="Q9NZP2">
    <property type="glycosylation" value="2 sites"/>
</dbReference>
<dbReference type="iPTMnet" id="Q9NZP2"/>
<dbReference type="PhosphoSitePlus" id="Q9NZP2"/>
<dbReference type="BioMuta" id="OR6C2"/>
<dbReference type="DMDM" id="85541047"/>
<dbReference type="PaxDb" id="9606-ENSP00000323606"/>
<dbReference type="Antibodypedia" id="58545">
    <property type="antibodies" value="41 antibodies from 14 providers"/>
</dbReference>
<dbReference type="DNASU" id="341416"/>
<dbReference type="Ensembl" id="ENST00000641202.1">
    <property type="protein sequence ID" value="ENSP00000493222.1"/>
    <property type="gene ID" value="ENSG00000179695.3"/>
</dbReference>
<dbReference type="Ensembl" id="ENST00000641516.1">
    <property type="protein sequence ID" value="ENSP00000493456.1"/>
    <property type="gene ID" value="ENSG00000179695.3"/>
</dbReference>
<dbReference type="GeneID" id="341416"/>
<dbReference type="KEGG" id="hsa:341416"/>
<dbReference type="MANE-Select" id="ENST00000641202.1">
    <property type="protein sequence ID" value="ENSP00000493222.1"/>
    <property type="RefSeq nucleotide sequence ID" value="NM_054105.2"/>
    <property type="RefSeq protein sequence ID" value="NP_473446.1"/>
</dbReference>
<dbReference type="UCSC" id="uc001sgz.1">
    <property type="organism name" value="human"/>
</dbReference>
<dbReference type="AGR" id="HGNC:15436"/>
<dbReference type="CTD" id="341416"/>
<dbReference type="GeneCards" id="OR6C2"/>
<dbReference type="HGNC" id="HGNC:15436">
    <property type="gene designation" value="OR6C2"/>
</dbReference>
<dbReference type="HPA" id="ENSG00000179695">
    <property type="expression patterns" value="Not detected"/>
</dbReference>
<dbReference type="neXtProt" id="NX_Q9NZP2"/>
<dbReference type="OpenTargets" id="ENSG00000179695"/>
<dbReference type="PharmGKB" id="PA32580"/>
<dbReference type="VEuPathDB" id="HostDB:ENSG00000179695"/>
<dbReference type="eggNOG" id="ENOG502T9K4">
    <property type="taxonomic scope" value="Eukaryota"/>
</dbReference>
<dbReference type="GeneTree" id="ENSGT01130000278306"/>
<dbReference type="HOGENOM" id="CLU_012526_1_1_1"/>
<dbReference type="InParanoid" id="Q9NZP2"/>
<dbReference type="OMA" id="WYIVRTI"/>
<dbReference type="OrthoDB" id="9442336at2759"/>
<dbReference type="PAN-GO" id="Q9NZP2">
    <property type="GO annotations" value="1 GO annotation based on evolutionary models"/>
</dbReference>
<dbReference type="PhylomeDB" id="Q9NZP2"/>
<dbReference type="TreeFam" id="TF336833"/>
<dbReference type="PathwayCommons" id="Q9NZP2"/>
<dbReference type="Reactome" id="R-HSA-9752946">
    <property type="pathway name" value="Expression and translocation of olfactory receptors"/>
</dbReference>
<dbReference type="SignaLink" id="Q9NZP2"/>
<dbReference type="BioGRID-ORCS" id="341416">
    <property type="hits" value="11 hits in 738 CRISPR screens"/>
</dbReference>
<dbReference type="GeneWiki" id="OR6C2"/>
<dbReference type="GenomeRNAi" id="341416"/>
<dbReference type="Pharos" id="Q9NZP2">
    <property type="development level" value="Tdark"/>
</dbReference>
<dbReference type="PRO" id="PR:Q9NZP2"/>
<dbReference type="Proteomes" id="UP000005640">
    <property type="component" value="Chromosome 12"/>
</dbReference>
<dbReference type="RNAct" id="Q9NZP2">
    <property type="molecule type" value="protein"/>
</dbReference>
<dbReference type="ExpressionAtlas" id="Q9NZP2">
    <property type="expression patterns" value="baseline and differential"/>
</dbReference>
<dbReference type="GO" id="GO:0016020">
    <property type="term" value="C:membrane"/>
    <property type="evidence" value="ECO:0000303"/>
    <property type="project" value="UniProtKB"/>
</dbReference>
<dbReference type="GO" id="GO:0005886">
    <property type="term" value="C:plasma membrane"/>
    <property type="evidence" value="ECO:0007669"/>
    <property type="project" value="UniProtKB-SubCell"/>
</dbReference>
<dbReference type="GO" id="GO:0004930">
    <property type="term" value="F:G protein-coupled receptor activity"/>
    <property type="evidence" value="ECO:0007669"/>
    <property type="project" value="UniProtKB-KW"/>
</dbReference>
<dbReference type="GO" id="GO:0004984">
    <property type="term" value="F:olfactory receptor activity"/>
    <property type="evidence" value="ECO:0000318"/>
    <property type="project" value="GO_Central"/>
</dbReference>
<dbReference type="GO" id="GO:0007608">
    <property type="term" value="P:sensory perception of smell"/>
    <property type="evidence" value="ECO:0000303"/>
    <property type="project" value="UniProtKB"/>
</dbReference>
<dbReference type="CDD" id="cd15912">
    <property type="entry name" value="7tmA_OR6C-like"/>
    <property type="match status" value="1"/>
</dbReference>
<dbReference type="FunFam" id="1.10.1220.70:FF:000001">
    <property type="entry name" value="Olfactory receptor"/>
    <property type="match status" value="1"/>
</dbReference>
<dbReference type="FunFam" id="1.20.1070.10:FF:000013">
    <property type="entry name" value="Olfactory receptor"/>
    <property type="match status" value="1"/>
</dbReference>
<dbReference type="Gene3D" id="1.20.1070.10">
    <property type="entry name" value="Rhodopsin 7-helix transmembrane proteins"/>
    <property type="match status" value="1"/>
</dbReference>
<dbReference type="InterPro" id="IPR000276">
    <property type="entry name" value="GPCR_Rhodpsn"/>
</dbReference>
<dbReference type="InterPro" id="IPR017452">
    <property type="entry name" value="GPCR_Rhodpsn_7TM"/>
</dbReference>
<dbReference type="InterPro" id="IPR000725">
    <property type="entry name" value="Olfact_rcpt"/>
</dbReference>
<dbReference type="InterPro" id="IPR047132">
    <property type="entry name" value="Olfact_rcpt_6C-like"/>
</dbReference>
<dbReference type="PANTHER" id="PTHR26454">
    <property type="entry name" value="OLFACTORY RECEPTOR"/>
    <property type="match status" value="1"/>
</dbReference>
<dbReference type="PANTHER" id="PTHR26454:SF8">
    <property type="entry name" value="OLFACTORY RECEPTOR 6C2"/>
    <property type="match status" value="1"/>
</dbReference>
<dbReference type="Pfam" id="PF13853">
    <property type="entry name" value="7tm_4"/>
    <property type="match status" value="1"/>
</dbReference>
<dbReference type="PRINTS" id="PR00237">
    <property type="entry name" value="GPCRRHODOPSN"/>
</dbReference>
<dbReference type="PRINTS" id="PR00245">
    <property type="entry name" value="OLFACTORYR"/>
</dbReference>
<dbReference type="SUPFAM" id="SSF81321">
    <property type="entry name" value="Family A G protein-coupled receptor-like"/>
    <property type="match status" value="1"/>
</dbReference>
<dbReference type="PROSITE" id="PS00237">
    <property type="entry name" value="G_PROTEIN_RECEP_F1_1"/>
    <property type="match status" value="1"/>
</dbReference>
<dbReference type="PROSITE" id="PS50262">
    <property type="entry name" value="G_PROTEIN_RECEP_F1_2"/>
    <property type="match status" value="1"/>
</dbReference>
<reference key="1">
    <citation type="journal article" date="2006" name="Nature">
        <title>The finished DNA sequence of human chromosome 12.</title>
        <authorList>
            <person name="Scherer S.E."/>
            <person name="Muzny D.M."/>
            <person name="Buhay C.J."/>
            <person name="Chen R."/>
            <person name="Cree A."/>
            <person name="Ding Y."/>
            <person name="Dugan-Rocha S."/>
            <person name="Gill R."/>
            <person name="Gunaratne P."/>
            <person name="Harris R.A."/>
            <person name="Hawes A.C."/>
            <person name="Hernandez J."/>
            <person name="Hodgson A.V."/>
            <person name="Hume J."/>
            <person name="Jackson A."/>
            <person name="Khan Z.M."/>
            <person name="Kovar-Smith C."/>
            <person name="Lewis L.R."/>
            <person name="Lozado R.J."/>
            <person name="Metzker M.L."/>
            <person name="Milosavljevic A."/>
            <person name="Miner G.R."/>
            <person name="Montgomery K.T."/>
            <person name="Morgan M.B."/>
            <person name="Nazareth L.V."/>
            <person name="Scott G."/>
            <person name="Sodergren E."/>
            <person name="Song X.-Z."/>
            <person name="Steffen D."/>
            <person name="Lovering R.C."/>
            <person name="Wheeler D.A."/>
            <person name="Worley K.C."/>
            <person name="Yuan Y."/>
            <person name="Zhang Z."/>
            <person name="Adams C.Q."/>
            <person name="Ansari-Lari M.A."/>
            <person name="Ayele M."/>
            <person name="Brown M.J."/>
            <person name="Chen G."/>
            <person name="Chen Z."/>
            <person name="Clerc-Blankenburg K.P."/>
            <person name="Davis C."/>
            <person name="Delgado O."/>
            <person name="Dinh H.H."/>
            <person name="Draper H."/>
            <person name="Gonzalez-Garay M.L."/>
            <person name="Havlak P."/>
            <person name="Jackson L.R."/>
            <person name="Jacob L.S."/>
            <person name="Kelly S.H."/>
            <person name="Li L."/>
            <person name="Li Z."/>
            <person name="Liu J."/>
            <person name="Liu W."/>
            <person name="Lu J."/>
            <person name="Maheshwari M."/>
            <person name="Nguyen B.-V."/>
            <person name="Okwuonu G.O."/>
            <person name="Pasternak S."/>
            <person name="Perez L.M."/>
            <person name="Plopper F.J.H."/>
            <person name="Santibanez J."/>
            <person name="Shen H."/>
            <person name="Tabor P.E."/>
            <person name="Verduzco D."/>
            <person name="Waldron L."/>
            <person name="Wang Q."/>
            <person name="Williams G.A."/>
            <person name="Zhang J."/>
            <person name="Zhou J."/>
            <person name="Allen C.C."/>
            <person name="Amin A.G."/>
            <person name="Anyalebechi V."/>
            <person name="Bailey M."/>
            <person name="Barbaria J.A."/>
            <person name="Bimage K.E."/>
            <person name="Bryant N.P."/>
            <person name="Burch P.E."/>
            <person name="Burkett C.E."/>
            <person name="Burrell K.L."/>
            <person name="Calderon E."/>
            <person name="Cardenas V."/>
            <person name="Carter K."/>
            <person name="Casias K."/>
            <person name="Cavazos I."/>
            <person name="Cavazos S.R."/>
            <person name="Ceasar H."/>
            <person name="Chacko J."/>
            <person name="Chan S.N."/>
            <person name="Chavez D."/>
            <person name="Christopoulos C."/>
            <person name="Chu J."/>
            <person name="Cockrell R."/>
            <person name="Cox C.D."/>
            <person name="Dang M."/>
            <person name="Dathorne S.R."/>
            <person name="David R."/>
            <person name="Davis C.M."/>
            <person name="Davy-Carroll L."/>
            <person name="Deshazo D.R."/>
            <person name="Donlin J.E."/>
            <person name="D'Souza L."/>
            <person name="Eaves K.A."/>
            <person name="Egan A."/>
            <person name="Emery-Cohen A.J."/>
            <person name="Escotto M."/>
            <person name="Flagg N."/>
            <person name="Forbes L.D."/>
            <person name="Gabisi A.M."/>
            <person name="Garza M."/>
            <person name="Hamilton C."/>
            <person name="Henderson N."/>
            <person name="Hernandez O."/>
            <person name="Hines S."/>
            <person name="Hogues M.E."/>
            <person name="Huang M."/>
            <person name="Idlebird D.G."/>
            <person name="Johnson R."/>
            <person name="Jolivet A."/>
            <person name="Jones S."/>
            <person name="Kagan R."/>
            <person name="King L.M."/>
            <person name="Leal B."/>
            <person name="Lebow H."/>
            <person name="Lee S."/>
            <person name="LeVan J.M."/>
            <person name="Lewis L.C."/>
            <person name="London P."/>
            <person name="Lorensuhewa L.M."/>
            <person name="Loulseged H."/>
            <person name="Lovett D.A."/>
            <person name="Lucier A."/>
            <person name="Lucier R.L."/>
            <person name="Ma J."/>
            <person name="Madu R.C."/>
            <person name="Mapua P."/>
            <person name="Martindale A.D."/>
            <person name="Martinez E."/>
            <person name="Massey E."/>
            <person name="Mawhiney S."/>
            <person name="Meador M.G."/>
            <person name="Mendez S."/>
            <person name="Mercado C."/>
            <person name="Mercado I.C."/>
            <person name="Merritt C.E."/>
            <person name="Miner Z.L."/>
            <person name="Minja E."/>
            <person name="Mitchell T."/>
            <person name="Mohabbat F."/>
            <person name="Mohabbat K."/>
            <person name="Montgomery B."/>
            <person name="Moore N."/>
            <person name="Morris S."/>
            <person name="Munidasa M."/>
            <person name="Ngo R.N."/>
            <person name="Nguyen N.B."/>
            <person name="Nickerson E."/>
            <person name="Nwaokelemeh O.O."/>
            <person name="Nwokenkwo S."/>
            <person name="Obregon M."/>
            <person name="Oguh M."/>
            <person name="Oragunye N."/>
            <person name="Oviedo R.J."/>
            <person name="Parish B.J."/>
            <person name="Parker D.N."/>
            <person name="Parrish J."/>
            <person name="Parks K.L."/>
            <person name="Paul H.A."/>
            <person name="Payton B.A."/>
            <person name="Perez A."/>
            <person name="Perrin W."/>
            <person name="Pickens A."/>
            <person name="Primus E.L."/>
            <person name="Pu L.-L."/>
            <person name="Puazo M."/>
            <person name="Quiles M.M."/>
            <person name="Quiroz J.B."/>
            <person name="Rabata D."/>
            <person name="Reeves K."/>
            <person name="Ruiz S.J."/>
            <person name="Shao H."/>
            <person name="Sisson I."/>
            <person name="Sonaike T."/>
            <person name="Sorelle R.P."/>
            <person name="Sutton A.E."/>
            <person name="Svatek A.F."/>
            <person name="Svetz L.A."/>
            <person name="Tamerisa K.S."/>
            <person name="Taylor T.R."/>
            <person name="Teague B."/>
            <person name="Thomas N."/>
            <person name="Thorn R.D."/>
            <person name="Trejos Z.Y."/>
            <person name="Trevino B.K."/>
            <person name="Ukegbu O.N."/>
            <person name="Urban J.B."/>
            <person name="Vasquez L.I."/>
            <person name="Vera V.A."/>
            <person name="Villasana D.M."/>
            <person name="Wang L."/>
            <person name="Ward-Moore S."/>
            <person name="Warren J.T."/>
            <person name="Wei X."/>
            <person name="White F."/>
            <person name="Williamson A.L."/>
            <person name="Wleczyk R."/>
            <person name="Wooden H.S."/>
            <person name="Wooden S.H."/>
            <person name="Yen J."/>
            <person name="Yoon L."/>
            <person name="Yoon V."/>
            <person name="Zorrilla S.E."/>
            <person name="Nelson D."/>
            <person name="Kucherlapati R."/>
            <person name="Weinstock G."/>
            <person name="Gibbs R.A."/>
        </authorList>
    </citation>
    <scope>NUCLEOTIDE SEQUENCE [LARGE SCALE GENOMIC DNA]</scope>
</reference>
<reference key="2">
    <citation type="journal article" date="2000" name="Proc. Natl. Acad. Sci. U.S.A.">
        <title>The olfactory receptor gene repertoire in primates and mouse: evidence for reduction of the functional fraction in primates.</title>
        <authorList>
            <person name="Rouquier S."/>
            <person name="Blancher A."/>
            <person name="Giorgi D."/>
        </authorList>
    </citation>
    <scope>NUCLEOTIDE SEQUENCE [GENOMIC DNA] OF 122-283</scope>
    <scope>VARIANT PRO-209</scope>
</reference>
<keyword id="KW-1003">Cell membrane</keyword>
<keyword id="KW-1015">Disulfide bond</keyword>
<keyword id="KW-0297">G-protein coupled receptor</keyword>
<keyword id="KW-0325">Glycoprotein</keyword>
<keyword id="KW-0472">Membrane</keyword>
<keyword id="KW-0552">Olfaction</keyword>
<keyword id="KW-0675">Receptor</keyword>
<keyword id="KW-1185">Reference proteome</keyword>
<keyword id="KW-0716">Sensory transduction</keyword>
<keyword id="KW-0807">Transducer</keyword>
<keyword id="KW-0812">Transmembrane</keyword>
<keyword id="KW-1133">Transmembrane helix</keyword>
<accession>Q9NZP2</accession>